<sequence length="1429" mass="161279">MASIPEERSAEHRARSYQLEMFEASLKGNIIVVMGTGSGKTQIALLRIIHELENSDGKLIWFLAPTVPLCLQQHRVISQHIPAVKSRTLLGSDKVELWTEQAVWDAVLEGLQVIVSTPAVLHDAMTHGFVRISRLGLLIFDEAHHCIRKHPTNMIMRNFYHPALQEYGPGAVPRILGLTASAGSSREGLQTIEMNLNSVCTTPQAHRQELLEYTHMPELRRVLYTPLMKENASLWEGSTLQKLLERDNTYCSGQMKTFVCKAVHIFQELGIWAAEYFIRASVEELLSHAYVHSKIDLDYDEREYLVNILSKSPVPDIDVHSTDPKDFPVSPKFEALISFLMSTEDINFSGLIFVEQRAAVTVMSYLLSTHPSTRDRFRTGSFIGMSNSTNRKTMLGDLLSAKMQPDTLDDFRYGRKNLIVATDVLKEGIDVSACSVVICYNIPKGFESFIQRRGRARRQNSTYSMMLSTEDDGSTLDKWQKFEKIMEEACLEDRRRTEELRALGSLDEDVCTRFCVRSTGAILTAEYAMQHLVHFCDTLPRQNYVEDKPEFSFERNDGGLLRAKVILPSSVNPKVRRAEGKAWWKTERAAKKEAAFYAYKALYEHGLVNDNLLPLTKSREFTRKDISLLPAVQKVSEQYDPWVDWAHLWSSTNLYQNRILVRQNEEDTSMKFITPTATPPIAPMKLCWDSETTYTLEFEAAGAVSLTAENIERMRAATSLYLQATTSTPLAGNKDYIALFGPDLPWDELETWLKKNQGHEPAIQVFSSQRPLDRMGVVRDRSRYGELLIFKRWLNRSGDLELECDPYPSKRRNLLQRQTLAKKRPAEDEILGSPTKKRILSASHCTIDRLPASETVFGRFIPVILDRLEAALVATRLCETVLRDIQFQDLRHVITAITMPLAQAPTDYQRYEFFGDSVLKFTVAASLFYNNPNWHEGYLTETLHALVQNARLTRAALDQGLDAYIISNRFTPRKWSAPLISEKLYASASTRSMSAKVLADVVEALIGAAYIDGGLHKAQSCIVRFLPEIELPETKLPRPESMPMSKDHKKPHLIQQENLENHIGYTFKDKTLLMEALTHPSCPYDTSIQSYQRLEFLGDAVLDMLIVDLIRAHHVECQQGEMTKIKHAIVNGHLLAFLCMQFKWAMPSPLTPSIDTGTETETEIISPPPKTLSLYSYLRYSPSRPLPLHVEPESGSSNALTRHNLLCPSILHALNNTTAYPWSLFSAIHADKFFSDVVESIIGAIFVDSGGDLGACAGFIERLGLVRIAKRILDERVDVTHPTQRAQIELQKLAARLGCNDGFRFECRTVRDLSSGKRKTLEVDINDHYGDEDPAVLGAEGPELTYTCTISLATLRTNQDFGRDLDDIVVTGCLSKEDAEIQAANLVIELVGRLESGRLYKKNMDLDIDTGVQVDLDLDMNLDPGITTG</sequence>
<reference key="1">
    <citation type="journal article" date="2005" name="Nature">
        <title>Sequencing of Aspergillus nidulans and comparative analysis with A. fumigatus and A. oryzae.</title>
        <authorList>
            <person name="Galagan J.E."/>
            <person name="Calvo S.E."/>
            <person name="Cuomo C."/>
            <person name="Ma L.-J."/>
            <person name="Wortman J.R."/>
            <person name="Batzoglou S."/>
            <person name="Lee S.-I."/>
            <person name="Bastuerkmen M."/>
            <person name="Spevak C.C."/>
            <person name="Clutterbuck J."/>
            <person name="Kapitonov V."/>
            <person name="Jurka J."/>
            <person name="Scazzocchio C."/>
            <person name="Farman M.L."/>
            <person name="Butler J."/>
            <person name="Purcell S."/>
            <person name="Harris S."/>
            <person name="Braus G.H."/>
            <person name="Draht O."/>
            <person name="Busch S."/>
            <person name="D'Enfert C."/>
            <person name="Bouchier C."/>
            <person name="Goldman G.H."/>
            <person name="Bell-Pedersen D."/>
            <person name="Griffiths-Jones S."/>
            <person name="Doonan J.H."/>
            <person name="Yu J."/>
            <person name="Vienken K."/>
            <person name="Pain A."/>
            <person name="Freitag M."/>
            <person name="Selker E.U."/>
            <person name="Archer D.B."/>
            <person name="Penalva M.A."/>
            <person name="Oakley B.R."/>
            <person name="Momany M."/>
            <person name="Tanaka T."/>
            <person name="Kumagai T."/>
            <person name="Asai K."/>
            <person name="Machida M."/>
            <person name="Nierman W.C."/>
            <person name="Denning D.W."/>
            <person name="Caddick M.X."/>
            <person name="Hynes M."/>
            <person name="Paoletti M."/>
            <person name="Fischer R."/>
            <person name="Miller B.L."/>
            <person name="Dyer P.S."/>
            <person name="Sachs M.S."/>
            <person name="Osmani S.A."/>
            <person name="Birren B.W."/>
        </authorList>
    </citation>
    <scope>NUCLEOTIDE SEQUENCE [LARGE SCALE GENOMIC DNA]</scope>
    <source>
        <strain>FGSC A4 / ATCC 38163 / CBS 112.46 / NRRL 194 / M139</strain>
    </source>
</reference>
<reference key="2">
    <citation type="journal article" date="2009" name="Fungal Genet. Biol.">
        <title>The 2008 update of the Aspergillus nidulans genome annotation: a community effort.</title>
        <authorList>
            <person name="Wortman J.R."/>
            <person name="Gilsenan J.M."/>
            <person name="Joardar V."/>
            <person name="Deegan J."/>
            <person name="Clutterbuck J."/>
            <person name="Andersen M.R."/>
            <person name="Archer D."/>
            <person name="Bencina M."/>
            <person name="Braus G."/>
            <person name="Coutinho P."/>
            <person name="von Dohren H."/>
            <person name="Doonan J."/>
            <person name="Driessen A.J."/>
            <person name="Durek P."/>
            <person name="Espeso E."/>
            <person name="Fekete E."/>
            <person name="Flipphi M."/>
            <person name="Estrada C.G."/>
            <person name="Geysens S."/>
            <person name="Goldman G."/>
            <person name="de Groot P.W."/>
            <person name="Hansen K."/>
            <person name="Harris S.D."/>
            <person name="Heinekamp T."/>
            <person name="Helmstaedt K."/>
            <person name="Henrissat B."/>
            <person name="Hofmann G."/>
            <person name="Homan T."/>
            <person name="Horio T."/>
            <person name="Horiuchi H."/>
            <person name="James S."/>
            <person name="Jones M."/>
            <person name="Karaffa L."/>
            <person name="Karanyi Z."/>
            <person name="Kato M."/>
            <person name="Keller N."/>
            <person name="Kelly D.E."/>
            <person name="Kiel J.A."/>
            <person name="Kim J.M."/>
            <person name="van der Klei I.J."/>
            <person name="Klis F.M."/>
            <person name="Kovalchuk A."/>
            <person name="Krasevec N."/>
            <person name="Kubicek C.P."/>
            <person name="Liu B."/>
            <person name="Maccabe A."/>
            <person name="Meyer V."/>
            <person name="Mirabito P."/>
            <person name="Miskei M."/>
            <person name="Mos M."/>
            <person name="Mullins J."/>
            <person name="Nelson D.R."/>
            <person name="Nielsen J."/>
            <person name="Oakley B.R."/>
            <person name="Osmani S.A."/>
            <person name="Pakula T."/>
            <person name="Paszewski A."/>
            <person name="Paulsen I."/>
            <person name="Pilsyk S."/>
            <person name="Pocsi I."/>
            <person name="Punt P.J."/>
            <person name="Ram A.F."/>
            <person name="Ren Q."/>
            <person name="Robellet X."/>
            <person name="Robson G."/>
            <person name="Seiboth B."/>
            <person name="van Solingen P."/>
            <person name="Specht T."/>
            <person name="Sun J."/>
            <person name="Taheri-Talesh N."/>
            <person name="Takeshita N."/>
            <person name="Ussery D."/>
            <person name="vanKuyk P.A."/>
            <person name="Visser H."/>
            <person name="van de Vondervoort P.J."/>
            <person name="de Vries R.P."/>
            <person name="Walton J."/>
            <person name="Xiang X."/>
            <person name="Xiong Y."/>
            <person name="Zeng A.P."/>
            <person name="Brandt B.W."/>
            <person name="Cornell M.J."/>
            <person name="van den Hondel C.A."/>
            <person name="Visser J."/>
            <person name="Oliver S.G."/>
            <person name="Turner G."/>
        </authorList>
    </citation>
    <scope>GENOME REANNOTATION</scope>
    <source>
        <strain>FGSC A4 / ATCC 38163 / CBS 112.46 / NRRL 194 / M139</strain>
    </source>
</reference>
<comment type="function">
    <text evidence="1">Dicer-like endonuclease involved in cleaving double-stranded RNA in the RNA interference (RNAi) pathway. Produces 21 to 25 bp dsRNAs (siRNAs) which target the selective destruction of homologous RNAs leading to sequence-specific suppression of gene expression, called post-transcriptional gene silencing (PTGS). Part of a broad host defense response against viral infection and transposons (By similarity).</text>
</comment>
<comment type="cofactor">
    <cofactor evidence="1">
        <name>Mg(2+)</name>
        <dbReference type="ChEBI" id="CHEBI:18420"/>
    </cofactor>
    <cofactor evidence="1">
        <name>Mn(2+)</name>
        <dbReference type="ChEBI" id="CHEBI:29035"/>
    </cofactor>
</comment>
<comment type="similarity">
    <text evidence="5">Belongs to the helicase family. Dicer subfamily.</text>
</comment>
<comment type="sequence caution" evidence="6">
    <conflict type="erroneous gene model prediction">
        <sequence resource="EMBL-CDS" id="CBF83228"/>
    </conflict>
</comment>
<comment type="sequence caution" evidence="6">
    <conflict type="erroneous gene model prediction">
        <sequence resource="EMBL-CDS" id="EAA62953"/>
    </conflict>
    <text>The predicted gene AN3189 has been split into 2 genes: AN10378 and AN10380.</text>
</comment>
<organism>
    <name type="scientific">Emericella nidulans (strain FGSC A4 / ATCC 38163 / CBS 112.46 / NRRL 194 / M139)</name>
    <name type="common">Aspergillus nidulans</name>
    <dbReference type="NCBI Taxonomy" id="227321"/>
    <lineage>
        <taxon>Eukaryota</taxon>
        <taxon>Fungi</taxon>
        <taxon>Dikarya</taxon>
        <taxon>Ascomycota</taxon>
        <taxon>Pezizomycotina</taxon>
        <taxon>Eurotiomycetes</taxon>
        <taxon>Eurotiomycetidae</taxon>
        <taxon>Eurotiales</taxon>
        <taxon>Aspergillaceae</taxon>
        <taxon>Aspergillus</taxon>
        <taxon>Aspergillus subgen. Nidulantes</taxon>
    </lineage>
</organism>
<keyword id="KW-0051">Antiviral defense</keyword>
<keyword id="KW-0930">Antiviral protein</keyword>
<keyword id="KW-0067">ATP-binding</keyword>
<keyword id="KW-0347">Helicase</keyword>
<keyword id="KW-0378">Hydrolase</keyword>
<keyword id="KW-0460">Magnesium</keyword>
<keyword id="KW-0464">Manganese</keyword>
<keyword id="KW-0479">Metal-binding</keyword>
<keyword id="KW-0547">Nucleotide-binding</keyword>
<keyword id="KW-1185">Reference proteome</keyword>
<keyword id="KW-0677">Repeat</keyword>
<keyword id="KW-0694">RNA-binding</keyword>
<protein>
    <recommendedName>
        <fullName>Dicer-like protein 2</fullName>
    </recommendedName>
    <domain>
        <recommendedName>
            <fullName>Endoribonuclease dcl2</fullName>
            <ecNumber>3.1.26.-</ecNumber>
        </recommendedName>
    </domain>
    <domain>
        <recommendedName>
            <fullName>ATP-dependent helicase dcl2</fullName>
            <ecNumber>3.6.4.-</ecNumber>
        </recommendedName>
    </domain>
</protein>
<evidence type="ECO:0000250" key="1"/>
<evidence type="ECO:0000255" key="2">
    <source>
        <dbReference type="PROSITE-ProRule" id="PRU00177"/>
    </source>
</evidence>
<evidence type="ECO:0000255" key="3">
    <source>
        <dbReference type="PROSITE-ProRule" id="PRU00541"/>
    </source>
</evidence>
<evidence type="ECO:0000255" key="4">
    <source>
        <dbReference type="PROSITE-ProRule" id="PRU00542"/>
    </source>
</evidence>
<evidence type="ECO:0000255" key="5">
    <source>
        <dbReference type="PROSITE-ProRule" id="PRU00657"/>
    </source>
</evidence>
<evidence type="ECO:0000305" key="6"/>
<dbReference type="EC" id="3.1.26.-"/>
<dbReference type="EC" id="3.6.4.-"/>
<dbReference type="EMBL" id="AACD01000052">
    <property type="protein sequence ID" value="EAA62953.1"/>
    <property type="status" value="ALT_SEQ"/>
    <property type="molecule type" value="Genomic_DNA"/>
</dbReference>
<dbReference type="EMBL" id="BN001306">
    <property type="protein sequence ID" value="CBF83228.1"/>
    <property type="status" value="ALT_SEQ"/>
    <property type="molecule type" value="Genomic_DNA"/>
</dbReference>
<dbReference type="RefSeq" id="XP_660793.1">
    <property type="nucleotide sequence ID" value="XM_655701.1"/>
</dbReference>
<dbReference type="STRING" id="227321.P0C5H7"/>
<dbReference type="KEGG" id="ani:ANIA_10380"/>
<dbReference type="eggNOG" id="KOG0701">
    <property type="taxonomic scope" value="Eukaryota"/>
</dbReference>
<dbReference type="HOGENOM" id="CLU_000907_4_6_1"/>
<dbReference type="InParanoid" id="P0C5H7"/>
<dbReference type="OrthoDB" id="2593073at2759"/>
<dbReference type="Proteomes" id="UP000000560">
    <property type="component" value="Chromosome VI"/>
</dbReference>
<dbReference type="GO" id="GO:0005737">
    <property type="term" value="C:cytoplasm"/>
    <property type="evidence" value="ECO:0000318"/>
    <property type="project" value="GO_Central"/>
</dbReference>
<dbReference type="GO" id="GO:0005524">
    <property type="term" value="F:ATP binding"/>
    <property type="evidence" value="ECO:0007669"/>
    <property type="project" value="UniProtKB-KW"/>
</dbReference>
<dbReference type="GO" id="GO:0004386">
    <property type="term" value="F:helicase activity"/>
    <property type="evidence" value="ECO:0007669"/>
    <property type="project" value="UniProtKB-KW"/>
</dbReference>
<dbReference type="GO" id="GO:0046872">
    <property type="term" value="F:metal ion binding"/>
    <property type="evidence" value="ECO:0007669"/>
    <property type="project" value="UniProtKB-KW"/>
</dbReference>
<dbReference type="GO" id="GO:0004525">
    <property type="term" value="F:ribonuclease III activity"/>
    <property type="evidence" value="ECO:0007669"/>
    <property type="project" value="InterPro"/>
</dbReference>
<dbReference type="GO" id="GO:0003723">
    <property type="term" value="F:RNA binding"/>
    <property type="evidence" value="ECO:0007669"/>
    <property type="project" value="UniProtKB-KW"/>
</dbReference>
<dbReference type="GO" id="GO:0051607">
    <property type="term" value="P:defense response to virus"/>
    <property type="evidence" value="ECO:0007669"/>
    <property type="project" value="UniProtKB-KW"/>
</dbReference>
<dbReference type="GO" id="GO:0050688">
    <property type="term" value="P:regulation of defense response to virus"/>
    <property type="evidence" value="ECO:0007669"/>
    <property type="project" value="UniProtKB-KW"/>
</dbReference>
<dbReference type="GO" id="GO:0031047">
    <property type="term" value="P:regulatory ncRNA-mediated gene silencing"/>
    <property type="evidence" value="ECO:0007669"/>
    <property type="project" value="UniProtKB-ARBA"/>
</dbReference>
<dbReference type="GO" id="GO:0006396">
    <property type="term" value="P:RNA processing"/>
    <property type="evidence" value="ECO:0007669"/>
    <property type="project" value="InterPro"/>
</dbReference>
<dbReference type="CDD" id="cd18034">
    <property type="entry name" value="DEXHc_dicer"/>
    <property type="match status" value="1"/>
</dbReference>
<dbReference type="CDD" id="cd00593">
    <property type="entry name" value="RIBOc"/>
    <property type="match status" value="2"/>
</dbReference>
<dbReference type="CDD" id="cd18802">
    <property type="entry name" value="SF2_C_dicer"/>
    <property type="match status" value="1"/>
</dbReference>
<dbReference type="FunFam" id="1.10.1520.10:FF:000015">
    <property type="entry name" value="Dicer-like protein 1"/>
    <property type="match status" value="1"/>
</dbReference>
<dbReference type="FunFam" id="3.40.50.300:FF:001669">
    <property type="entry name" value="Dicer-like protein 1"/>
    <property type="match status" value="1"/>
</dbReference>
<dbReference type="FunFam" id="1.10.1520.10:FF:000032">
    <property type="entry name" value="Dicer-like protein 2"/>
    <property type="match status" value="1"/>
</dbReference>
<dbReference type="FunFam" id="3.30.160.380:FF:000005">
    <property type="entry name" value="Dicer-like protein 2"/>
    <property type="match status" value="1"/>
</dbReference>
<dbReference type="FunFam" id="3.40.50.300:FF:002480">
    <property type="entry name" value="Dicer-like protein 2"/>
    <property type="match status" value="1"/>
</dbReference>
<dbReference type="Gene3D" id="3.30.160.380">
    <property type="entry name" value="Dicer dimerisation domain"/>
    <property type="match status" value="1"/>
</dbReference>
<dbReference type="Gene3D" id="3.40.50.300">
    <property type="entry name" value="P-loop containing nucleotide triphosphate hydrolases"/>
    <property type="match status" value="2"/>
</dbReference>
<dbReference type="Gene3D" id="1.10.1520.10">
    <property type="entry name" value="Ribonuclease III domain"/>
    <property type="match status" value="2"/>
</dbReference>
<dbReference type="InterPro" id="IPR011545">
    <property type="entry name" value="DEAD/DEAH_box_helicase_dom"/>
</dbReference>
<dbReference type="InterPro" id="IPR038248">
    <property type="entry name" value="Dicer_dimer_sf"/>
</dbReference>
<dbReference type="InterPro" id="IPR005034">
    <property type="entry name" value="Dicer_dimerisation_dom"/>
</dbReference>
<dbReference type="InterPro" id="IPR014001">
    <property type="entry name" value="Helicase_ATP-bd"/>
</dbReference>
<dbReference type="InterPro" id="IPR001650">
    <property type="entry name" value="Helicase_C-like"/>
</dbReference>
<dbReference type="InterPro" id="IPR027417">
    <property type="entry name" value="P-loop_NTPase"/>
</dbReference>
<dbReference type="InterPro" id="IPR051363">
    <property type="entry name" value="RLR_Helicase"/>
</dbReference>
<dbReference type="InterPro" id="IPR000999">
    <property type="entry name" value="RNase_III_dom"/>
</dbReference>
<dbReference type="InterPro" id="IPR036389">
    <property type="entry name" value="RNase_III_sf"/>
</dbReference>
<dbReference type="PANTHER" id="PTHR14074:SF16">
    <property type="entry name" value="ANTIVIRAL INNATE IMMUNE RESPONSE RECEPTOR RIG-I"/>
    <property type="match status" value="1"/>
</dbReference>
<dbReference type="PANTHER" id="PTHR14074">
    <property type="entry name" value="HELICASE WITH DEATH DOMAIN-RELATED"/>
    <property type="match status" value="1"/>
</dbReference>
<dbReference type="Pfam" id="PF00270">
    <property type="entry name" value="DEAD"/>
    <property type="match status" value="1"/>
</dbReference>
<dbReference type="Pfam" id="PF03368">
    <property type="entry name" value="Dicer_dimer"/>
    <property type="match status" value="1"/>
</dbReference>
<dbReference type="Pfam" id="PF00271">
    <property type="entry name" value="Helicase_C"/>
    <property type="match status" value="1"/>
</dbReference>
<dbReference type="Pfam" id="PF00636">
    <property type="entry name" value="Ribonuclease_3"/>
    <property type="match status" value="2"/>
</dbReference>
<dbReference type="SMART" id="SM00487">
    <property type="entry name" value="DEXDc"/>
    <property type="match status" value="1"/>
</dbReference>
<dbReference type="SMART" id="SM00490">
    <property type="entry name" value="HELICc"/>
    <property type="match status" value="1"/>
</dbReference>
<dbReference type="SMART" id="SM00535">
    <property type="entry name" value="RIBOc"/>
    <property type="match status" value="2"/>
</dbReference>
<dbReference type="SUPFAM" id="SSF52540">
    <property type="entry name" value="P-loop containing nucleoside triphosphate hydrolases"/>
    <property type="match status" value="1"/>
</dbReference>
<dbReference type="SUPFAM" id="SSF69065">
    <property type="entry name" value="RNase III domain-like"/>
    <property type="match status" value="2"/>
</dbReference>
<dbReference type="PROSITE" id="PS51327">
    <property type="entry name" value="DICER_DSRBF"/>
    <property type="match status" value="1"/>
</dbReference>
<dbReference type="PROSITE" id="PS51192">
    <property type="entry name" value="HELICASE_ATP_BIND_1"/>
    <property type="match status" value="1"/>
</dbReference>
<dbReference type="PROSITE" id="PS51194">
    <property type="entry name" value="HELICASE_CTER"/>
    <property type="match status" value="1"/>
</dbReference>
<dbReference type="PROSITE" id="PS00517">
    <property type="entry name" value="RNASE_3_1"/>
    <property type="match status" value="1"/>
</dbReference>
<dbReference type="PROSITE" id="PS50142">
    <property type="entry name" value="RNASE_3_2"/>
    <property type="match status" value="2"/>
</dbReference>
<accession>P0C5H7</accession>
<accession>C8VIC3</accession>
<accession>Q5B8E1</accession>
<name>DCL2_EMENI</name>
<proteinExistence type="inferred from homology"/>
<gene>
    <name type="primary">dcl2</name>
    <name type="ORF">AN10380</name>
</gene>
<feature type="chain" id="PRO_0000306793" description="Dicer-like protein 2">
    <location>
        <begin position="1"/>
        <end position="1429"/>
    </location>
</feature>
<feature type="domain" description="Helicase ATP-binding" evidence="3">
    <location>
        <begin position="21"/>
        <end position="200"/>
    </location>
</feature>
<feature type="domain" description="Helicase C-terminal" evidence="4">
    <location>
        <begin position="335"/>
        <end position="501"/>
    </location>
</feature>
<feature type="domain" description="Dicer dsRNA-binding fold" evidence="5">
    <location>
        <begin position="528"/>
        <end position="622"/>
    </location>
</feature>
<feature type="domain" description="RNase III 1" evidence="2">
    <location>
        <begin position="874"/>
        <end position="1014"/>
    </location>
</feature>
<feature type="domain" description="RNase III 2" evidence="2">
    <location>
        <begin position="1056"/>
        <end position="1250"/>
    </location>
</feature>
<feature type="short sequence motif" description="DEAH box">
    <location>
        <begin position="141"/>
        <end position="144"/>
    </location>
</feature>
<feature type="binding site" evidence="3">
    <location>
        <begin position="34"/>
        <end position="41"/>
    </location>
    <ligand>
        <name>ATP</name>
        <dbReference type="ChEBI" id="CHEBI:30616"/>
    </ligand>
</feature>
<feature type="binding site" evidence="1">
    <location>
        <position position="1095"/>
    </location>
    <ligand>
        <name>Mg(2+)</name>
        <dbReference type="ChEBI" id="CHEBI:18420"/>
    </ligand>
</feature>
<feature type="binding site" evidence="1">
    <location>
        <position position="1236"/>
    </location>
    <ligand>
        <name>Mg(2+)</name>
        <dbReference type="ChEBI" id="CHEBI:18420"/>
    </ligand>
</feature>
<feature type="binding site" evidence="1">
    <location>
        <position position="1239"/>
    </location>
    <ligand>
        <name>Mg(2+)</name>
        <dbReference type="ChEBI" id="CHEBI:18420"/>
    </ligand>
</feature>
<feature type="site" description="Important for activity" evidence="1">
    <location>
        <position position="1232"/>
    </location>
</feature>